<protein>
    <recommendedName>
        <fullName evidence="1">tRNA uridine 5-carboxymethylaminomethyl modification enzyme MnmG</fullName>
    </recommendedName>
    <alternativeName>
        <fullName evidence="1">Glucose-inhibited division protein A</fullName>
    </alternativeName>
</protein>
<dbReference type="EMBL" id="CP000482">
    <property type="protein sequence ID" value="ABL01213.1"/>
    <property type="molecule type" value="Genomic_DNA"/>
</dbReference>
<dbReference type="RefSeq" id="WP_011737425.1">
    <property type="nucleotide sequence ID" value="NC_008609.1"/>
</dbReference>
<dbReference type="SMR" id="A1AV42"/>
<dbReference type="STRING" id="338966.Ppro_3621"/>
<dbReference type="KEGG" id="ppd:Ppro_3621"/>
<dbReference type="eggNOG" id="COG0445">
    <property type="taxonomic scope" value="Bacteria"/>
</dbReference>
<dbReference type="HOGENOM" id="CLU_007831_2_2_7"/>
<dbReference type="OrthoDB" id="9815560at2"/>
<dbReference type="Proteomes" id="UP000006732">
    <property type="component" value="Chromosome"/>
</dbReference>
<dbReference type="GO" id="GO:0005829">
    <property type="term" value="C:cytosol"/>
    <property type="evidence" value="ECO:0007669"/>
    <property type="project" value="TreeGrafter"/>
</dbReference>
<dbReference type="GO" id="GO:0050660">
    <property type="term" value="F:flavin adenine dinucleotide binding"/>
    <property type="evidence" value="ECO:0007669"/>
    <property type="project" value="UniProtKB-UniRule"/>
</dbReference>
<dbReference type="GO" id="GO:0030488">
    <property type="term" value="P:tRNA methylation"/>
    <property type="evidence" value="ECO:0007669"/>
    <property type="project" value="TreeGrafter"/>
</dbReference>
<dbReference type="GO" id="GO:0002098">
    <property type="term" value="P:tRNA wobble uridine modification"/>
    <property type="evidence" value="ECO:0007669"/>
    <property type="project" value="InterPro"/>
</dbReference>
<dbReference type="FunFam" id="1.10.10.1800:FF:000001">
    <property type="entry name" value="tRNA uridine 5-carboxymethylaminomethyl modification enzyme MnmG"/>
    <property type="match status" value="1"/>
</dbReference>
<dbReference type="FunFam" id="1.10.150.570:FF:000001">
    <property type="entry name" value="tRNA uridine 5-carboxymethylaminomethyl modification enzyme MnmG"/>
    <property type="match status" value="1"/>
</dbReference>
<dbReference type="FunFam" id="3.50.50.60:FF:000002">
    <property type="entry name" value="tRNA uridine 5-carboxymethylaminomethyl modification enzyme MnmG"/>
    <property type="match status" value="1"/>
</dbReference>
<dbReference type="FunFam" id="3.50.50.60:FF:000010">
    <property type="entry name" value="tRNA uridine 5-carboxymethylaminomethyl modification enzyme MnmG"/>
    <property type="match status" value="1"/>
</dbReference>
<dbReference type="Gene3D" id="3.50.50.60">
    <property type="entry name" value="FAD/NAD(P)-binding domain"/>
    <property type="match status" value="2"/>
</dbReference>
<dbReference type="Gene3D" id="1.10.150.570">
    <property type="entry name" value="GidA associated domain, C-terminal subdomain"/>
    <property type="match status" value="1"/>
</dbReference>
<dbReference type="Gene3D" id="1.10.10.1800">
    <property type="entry name" value="tRNA uridine 5-carboxymethylaminomethyl modification enzyme MnmG/GidA"/>
    <property type="match status" value="1"/>
</dbReference>
<dbReference type="HAMAP" id="MF_00129">
    <property type="entry name" value="MnmG_GidA"/>
    <property type="match status" value="1"/>
</dbReference>
<dbReference type="InterPro" id="IPR036188">
    <property type="entry name" value="FAD/NAD-bd_sf"/>
</dbReference>
<dbReference type="InterPro" id="IPR049312">
    <property type="entry name" value="GIDA_C_N"/>
</dbReference>
<dbReference type="InterPro" id="IPR004416">
    <property type="entry name" value="MnmG"/>
</dbReference>
<dbReference type="InterPro" id="IPR002218">
    <property type="entry name" value="MnmG-rel"/>
</dbReference>
<dbReference type="InterPro" id="IPR020595">
    <property type="entry name" value="MnmG-rel_CS"/>
</dbReference>
<dbReference type="InterPro" id="IPR026904">
    <property type="entry name" value="MnmG_C"/>
</dbReference>
<dbReference type="InterPro" id="IPR047001">
    <property type="entry name" value="MnmG_C_subdom"/>
</dbReference>
<dbReference type="InterPro" id="IPR044920">
    <property type="entry name" value="MnmG_C_subdom_sf"/>
</dbReference>
<dbReference type="InterPro" id="IPR040131">
    <property type="entry name" value="MnmG_N"/>
</dbReference>
<dbReference type="NCBIfam" id="TIGR00136">
    <property type="entry name" value="mnmG_gidA"/>
    <property type="match status" value="1"/>
</dbReference>
<dbReference type="PANTHER" id="PTHR11806">
    <property type="entry name" value="GLUCOSE INHIBITED DIVISION PROTEIN A"/>
    <property type="match status" value="1"/>
</dbReference>
<dbReference type="PANTHER" id="PTHR11806:SF0">
    <property type="entry name" value="PROTEIN MTO1 HOMOLOG, MITOCHONDRIAL"/>
    <property type="match status" value="1"/>
</dbReference>
<dbReference type="Pfam" id="PF01134">
    <property type="entry name" value="GIDA"/>
    <property type="match status" value="1"/>
</dbReference>
<dbReference type="Pfam" id="PF21680">
    <property type="entry name" value="GIDA_C_1st"/>
    <property type="match status" value="1"/>
</dbReference>
<dbReference type="Pfam" id="PF13932">
    <property type="entry name" value="SAM_GIDA_C"/>
    <property type="match status" value="1"/>
</dbReference>
<dbReference type="PRINTS" id="PR00368">
    <property type="entry name" value="FADPNR"/>
</dbReference>
<dbReference type="PRINTS" id="PR00411">
    <property type="entry name" value="PNDRDTASEI"/>
</dbReference>
<dbReference type="SMART" id="SM01228">
    <property type="entry name" value="GIDA_assoc_3"/>
    <property type="match status" value="1"/>
</dbReference>
<dbReference type="SUPFAM" id="SSF51905">
    <property type="entry name" value="FAD/NAD(P)-binding domain"/>
    <property type="match status" value="1"/>
</dbReference>
<dbReference type="PROSITE" id="PS01280">
    <property type="entry name" value="GIDA_1"/>
    <property type="match status" value="1"/>
</dbReference>
<dbReference type="PROSITE" id="PS01281">
    <property type="entry name" value="GIDA_2"/>
    <property type="match status" value="1"/>
</dbReference>
<gene>
    <name evidence="1" type="primary">mnmG</name>
    <name evidence="1" type="synonym">gidA</name>
    <name type="ordered locus">Ppro_3621</name>
</gene>
<keyword id="KW-0963">Cytoplasm</keyword>
<keyword id="KW-0274">FAD</keyword>
<keyword id="KW-0285">Flavoprotein</keyword>
<keyword id="KW-0520">NAD</keyword>
<keyword id="KW-1185">Reference proteome</keyword>
<keyword id="KW-0819">tRNA processing</keyword>
<reference key="1">
    <citation type="submission" date="2006-10" db="EMBL/GenBank/DDBJ databases">
        <title>Complete sequence of chromosome of Pelobacter propionicus DSM 2379.</title>
        <authorList>
            <consortium name="US DOE Joint Genome Institute"/>
            <person name="Copeland A."/>
            <person name="Lucas S."/>
            <person name="Lapidus A."/>
            <person name="Barry K."/>
            <person name="Detter J.C."/>
            <person name="Glavina del Rio T."/>
            <person name="Hammon N."/>
            <person name="Israni S."/>
            <person name="Dalin E."/>
            <person name="Tice H."/>
            <person name="Pitluck S."/>
            <person name="Saunders E."/>
            <person name="Brettin T."/>
            <person name="Bruce D."/>
            <person name="Han C."/>
            <person name="Tapia R."/>
            <person name="Schmutz J."/>
            <person name="Larimer F."/>
            <person name="Land M."/>
            <person name="Hauser L."/>
            <person name="Kyrpides N."/>
            <person name="Kim E."/>
            <person name="Lovley D."/>
            <person name="Richardson P."/>
        </authorList>
    </citation>
    <scope>NUCLEOTIDE SEQUENCE [LARGE SCALE GENOMIC DNA]</scope>
    <source>
        <strain>DSM 2379 / NBRC 103807 / OttBd1</strain>
    </source>
</reference>
<name>MNMG_PELPD</name>
<accession>A1AV42</accession>
<evidence type="ECO:0000255" key="1">
    <source>
        <dbReference type="HAMAP-Rule" id="MF_00129"/>
    </source>
</evidence>
<organism>
    <name type="scientific">Pelobacter propionicus (strain DSM 2379 / NBRC 103807 / OttBd1)</name>
    <dbReference type="NCBI Taxonomy" id="338966"/>
    <lineage>
        <taxon>Bacteria</taxon>
        <taxon>Pseudomonadati</taxon>
        <taxon>Thermodesulfobacteriota</taxon>
        <taxon>Desulfuromonadia</taxon>
        <taxon>Desulfuromonadales</taxon>
        <taxon>Desulfuromonadaceae</taxon>
        <taxon>Pelobacter</taxon>
    </lineage>
</organism>
<comment type="function">
    <text evidence="1">NAD-binding protein involved in the addition of a carboxymethylaminomethyl (cmnm) group at the wobble position (U34) of certain tRNAs, forming tRNA-cmnm(5)s(2)U34.</text>
</comment>
<comment type="cofactor">
    <cofactor evidence="1">
        <name>FAD</name>
        <dbReference type="ChEBI" id="CHEBI:57692"/>
    </cofactor>
</comment>
<comment type="subunit">
    <text evidence="1">Homodimer. Heterotetramer of two MnmE and two MnmG subunits.</text>
</comment>
<comment type="subcellular location">
    <subcellularLocation>
        <location evidence="1">Cytoplasm</location>
    </subcellularLocation>
</comment>
<comment type="similarity">
    <text evidence="1">Belongs to the MnmG family.</text>
</comment>
<proteinExistence type="inferred from homology"/>
<feature type="chain" id="PRO_0000345312" description="tRNA uridine 5-carboxymethylaminomethyl modification enzyme MnmG">
    <location>
        <begin position="1"/>
        <end position="628"/>
    </location>
</feature>
<feature type="binding site" evidence="1">
    <location>
        <begin position="14"/>
        <end position="19"/>
    </location>
    <ligand>
        <name>FAD</name>
        <dbReference type="ChEBI" id="CHEBI:57692"/>
    </ligand>
</feature>
<feature type="binding site" evidence="1">
    <location>
        <position position="126"/>
    </location>
    <ligand>
        <name>FAD</name>
        <dbReference type="ChEBI" id="CHEBI:57692"/>
    </ligand>
</feature>
<feature type="binding site" evidence="1">
    <location>
        <position position="181"/>
    </location>
    <ligand>
        <name>FAD</name>
        <dbReference type="ChEBI" id="CHEBI:57692"/>
    </ligand>
</feature>
<feature type="binding site" evidence="1">
    <location>
        <begin position="273"/>
        <end position="287"/>
    </location>
    <ligand>
        <name>NAD(+)</name>
        <dbReference type="ChEBI" id="CHEBI:57540"/>
    </ligand>
</feature>
<feature type="binding site" evidence="1">
    <location>
        <position position="370"/>
    </location>
    <ligand>
        <name>FAD</name>
        <dbReference type="ChEBI" id="CHEBI:57692"/>
    </ligand>
</feature>
<sequence>MMTYDFEYDVIVVGAGHAGCEAALAAARMGCRTLLLTINLDAIALMSCNPSIGGLAKGHLVKEIDALGGEMARNIDATGIQFRILNTRKGPAVRASRAQADKQLYRLRMKRVLENQDNLHLKQGEVTALYCDGSVVRGVDTRSGIRFLGKTVVLTTGTFMRGLIHIGLTHYEGGRAGDLPSIGLSDQLKQLGLQVGRLKTGTPARLDGRTIDFSRLEPQHGDNPPQPFSFSTERITMRQVPCHIAYTNERSHDIIRSGLDRSPLYAGIIEGIGPRYCPSIEDKVVRFPDKDRHQAFIEPEGLDTVEMYPSGMSTSLPIDIQIAFYRSMEGLERVEIMRPAYGIEYDYVDPIQLHTSLETKAITNLYHAGQINGTSGYEEAAGQGIVAGINAALRTRGEEPLILSRSESYIGVMIDDLITLGTKEPYRMFTSRAEYRLLLREDNADQRLREIGYRVGLVSDAEYEGYLRKRDMIQAERERLAATRISMSQAEEEYFTARGLPDLQKGTSYEQLLRRPEITYDDLLSFDTVSRETPSVVREQVEIQIKYQGYIERQLEQIRRSAKLENTPLPTDMDYAAINGLTTEVKEKLTKVRPDTLGQASRIPGVTPAAVSVLSIALKAHAGARKQG</sequence>